<keyword id="KW-0156">Chromatin regulator</keyword>
<keyword id="KW-0158">Chromosome</keyword>
<keyword id="KW-0175">Coiled coil</keyword>
<keyword id="KW-0217">Developmental protein</keyword>
<keyword id="KW-0223">Dioxygenase</keyword>
<keyword id="KW-0238">DNA-binding</keyword>
<keyword id="KW-0408">Iron</keyword>
<keyword id="KW-0479">Metal-binding</keyword>
<keyword id="KW-0539">Nucleus</keyword>
<keyword id="KW-0560">Oxidoreductase</keyword>
<keyword id="KW-1185">Reference proteome</keyword>
<keyword id="KW-0862">Zinc</keyword>
<keyword id="KW-0863">Zinc-finger</keyword>
<dbReference type="EC" id="1.14.11.80" evidence="6"/>
<dbReference type="EMBL" id="CM004471">
    <property type="protein sequence ID" value="OCT86689.1"/>
    <property type="molecule type" value="Genomic_DNA"/>
</dbReference>
<dbReference type="EMBL" id="HQ220207">
    <property type="protein sequence ID" value="ADU77105.1"/>
    <property type="molecule type" value="mRNA"/>
</dbReference>
<dbReference type="SMR" id="A0A1L8GSA2"/>
<dbReference type="STRING" id="8355.A0A1L8GSA2"/>
<dbReference type="PaxDb" id="8355-A0A1L8GSA2"/>
<dbReference type="GeneID" id="108712780"/>
<dbReference type="KEGG" id="xla:108712780"/>
<dbReference type="AGR" id="Xenbase:XB-GENE-17338508"/>
<dbReference type="CTD" id="108712780"/>
<dbReference type="Xenbase" id="XB-GENE-17338508">
    <property type="gene designation" value="tet3.S"/>
</dbReference>
<dbReference type="OMA" id="SVYSCHS"/>
<dbReference type="OrthoDB" id="8854879at2759"/>
<dbReference type="Proteomes" id="UP000186698">
    <property type="component" value="Chromosome 3S"/>
</dbReference>
<dbReference type="Proteomes" id="UP000694892">
    <property type="component" value="Chromosome 3S"/>
</dbReference>
<dbReference type="Bgee" id="108712780">
    <property type="expression patterns" value="Expressed in blastula and 8 other cell types or tissues"/>
</dbReference>
<dbReference type="GO" id="GO:0005694">
    <property type="term" value="C:chromosome"/>
    <property type="evidence" value="ECO:0007669"/>
    <property type="project" value="UniProtKB-SubCell"/>
</dbReference>
<dbReference type="GO" id="GO:0005634">
    <property type="term" value="C:nucleus"/>
    <property type="evidence" value="ECO:0000318"/>
    <property type="project" value="GO_Central"/>
</dbReference>
<dbReference type="GO" id="GO:0070579">
    <property type="term" value="F:5-methylcytosine dioxygenase activity"/>
    <property type="evidence" value="ECO:0000314"/>
    <property type="project" value="ARUK-UCL"/>
</dbReference>
<dbReference type="GO" id="GO:0008327">
    <property type="term" value="F:methyl-CpG binding"/>
    <property type="evidence" value="ECO:0000314"/>
    <property type="project" value="ARUK-UCL"/>
</dbReference>
<dbReference type="GO" id="GO:0000978">
    <property type="term" value="F:RNA polymerase II cis-regulatory region sequence-specific DNA binding"/>
    <property type="evidence" value="ECO:0000316"/>
    <property type="project" value="ARUK-UCL"/>
</dbReference>
<dbReference type="GO" id="GO:0008270">
    <property type="term" value="F:zinc ion binding"/>
    <property type="evidence" value="ECO:0007669"/>
    <property type="project" value="UniProtKB-KW"/>
</dbReference>
<dbReference type="GO" id="GO:0141167">
    <property type="term" value="P:chromosomal 5-methylcytosine DNA demethylation, oxidation pathway"/>
    <property type="evidence" value="ECO:0007669"/>
    <property type="project" value="InterPro"/>
</dbReference>
<dbReference type="GO" id="GO:0001654">
    <property type="term" value="P:eye development"/>
    <property type="evidence" value="ECO:0000316"/>
    <property type="project" value="ARUK-UCL"/>
</dbReference>
<dbReference type="GO" id="GO:0007399">
    <property type="term" value="P:nervous system development"/>
    <property type="evidence" value="ECO:0000316"/>
    <property type="project" value="ARUK-UCL"/>
</dbReference>
<dbReference type="GO" id="GO:0044029">
    <property type="term" value="P:positive regulation of gene expression via chromosomal CpG island demethylation"/>
    <property type="evidence" value="ECO:0000316"/>
    <property type="project" value="ARUK-UCL"/>
</dbReference>
<dbReference type="GO" id="GO:0045944">
    <property type="term" value="P:positive regulation of transcription by RNA polymerase II"/>
    <property type="evidence" value="ECO:0000318"/>
    <property type="project" value="GO_Central"/>
</dbReference>
<dbReference type="CDD" id="cd18897">
    <property type="entry name" value="TET3"/>
    <property type="match status" value="1"/>
</dbReference>
<dbReference type="InterPro" id="IPR024779">
    <property type="entry name" value="2OGFeDO_JBP1/TET_oxygenase_dom"/>
</dbReference>
<dbReference type="InterPro" id="IPR040175">
    <property type="entry name" value="TET1/2/3"/>
</dbReference>
<dbReference type="InterPro" id="IPR046942">
    <property type="entry name" value="TET_oxygenase"/>
</dbReference>
<dbReference type="InterPro" id="IPR002857">
    <property type="entry name" value="Znf_CXXC"/>
</dbReference>
<dbReference type="PANTHER" id="PTHR23358">
    <property type="entry name" value="METHYLCYTOSINE DIOXYGENASE TET"/>
    <property type="match status" value="1"/>
</dbReference>
<dbReference type="PANTHER" id="PTHR23358:SF6">
    <property type="entry name" value="METHYLCYTOSINE DIOXYGENASE TET"/>
    <property type="match status" value="1"/>
</dbReference>
<dbReference type="Pfam" id="PF12851">
    <property type="entry name" value="Tet_JBP"/>
    <property type="match status" value="1"/>
</dbReference>
<dbReference type="Pfam" id="PF02008">
    <property type="entry name" value="zf-CXXC"/>
    <property type="match status" value="1"/>
</dbReference>
<dbReference type="SMART" id="SM01333">
    <property type="entry name" value="Tet_JBP"/>
    <property type="match status" value="1"/>
</dbReference>
<dbReference type="PROSITE" id="PS51058">
    <property type="entry name" value="ZF_CXXC"/>
    <property type="match status" value="1"/>
</dbReference>
<proteinExistence type="evidence at protein level"/>
<accession>A0A1L8GSA2</accession>
<accession>K9JHZ7</accession>
<sequence>MMETQPTSLPHVLPQDVYEFCDDRKSLGRLRVSEMPAESNGDGGGSKGDGAAVVAKEVPEQSNKKRKRCGVCVPCLRKEPCGACYNCVNRSTSHQICKMRKCEQLKKKRVVPLKGVEAVNKDDSKNQAKEQVPNVKNCSESILVDGPKTDQMEAGPVNHVQEGRLKKECDSTLPSKACEDLANQLLMEANSWLSNTAAPQDPCNKLNWDKPTIPNHTAATNNSNLEDAKNLVAFSAVAEAMSNYGMPASGTPSSVSMQLYEKFNYETNRDSSGHPEGNAPSCPEDLNTLKTALALAKHGVKPPNCNCDGPECPDYLEWLENKIKSSQKDSQESSFPGLGQVSKELVQKSYPKEEVLNLENKNLCPSGNLPFSQNALSLAKEKNISLQTAIAIEALTQLSSALPQTNNECPNSSSQPLINTCDQLTHFPTAKGNQLPIFPMACNELFQNQQSQLYTGKNALPVPQSPRQTSWEQNKKPSYQEGQYIPENLSQSSSVLPSDASTPQKTEFLQQWIQNADLLKSPSDPMTGLKQLLGNTDEYIKSVFKGPEALPNKIKHVKTKRTIKSIKKKSSDFLKMSPDQQLSQLLQENDFHHNAQAALQQHLHHKRNLFVDPNTMEACAQEQQNWWVPKSQKLPVSKTTENPVKERKKRRQRSPSQKQVEPKPKPPRKQVQIKKPRMKEGNAVFMPVSQISLDAFRGAEKEENQLKEMNLEKSLSNNIQPDLLESQSILVTGSQANIENRKTVNTQETCNENQASNGKASNFALCVNQANSLGAKDSCPTPSTDDASSSSGQGDSANQHTNVGDVPGQNDLSCLDDKFEDLLRQFEAEFGEDFSLPGSEAPSQNGVGPPKQQISGDPQFKMPFPSQLLPSENSTRPDAHSNPALSNNPISHNVSHNLDSLFSSKSPKKIKIESSGAITVVSTTCFYSEENQHLDGTPTKSDLPFNPTLSGFLESPLKYLTSPTKSLIDTPAKMAQAEFPTCDCVEQINEKDEGPYYTHLGSGPTVASIRELMEDRFGEKGEAIRIEKVIYTGKEGKSSRGCPIAKWVIRRQSEDEKLMCLVRQRAGHHCENAVIIILIMAWEGIPRALGDSLYSDITETITKYGNPTSRRCGLNDDRTCACQGKDPNTCGASFSFGCSWSMYFNGCKYARSKTPRKFRLIGDNPKEEEFLNDNFQDLATKVAPVYQMLAPQSYENQVNNEEVAIDCRLGLKEGRPFSGVTACMDFCAHAHKDQHNLYNGCTVVCTLTKEDNRTIGRIPEDEQLHVLPLYKVSSTDEFGSEDGQAEKIRKGGIQVLASFPREVRKLSEPAKSCRQRQLDAKKAAAEKKKLQKEKLVSPDKTKQEPADTKMCQQNPGVPQQQTKPCVKVEPSNHYNTYKYNGNGVVESYSVLGSCRPSDPYSMNSVYSYHSFYAQPNLPSVNGFHSKFALPPFGFYGFPNNPVVPNQFMNYGTSDARNSGWMNNSFEKKPDVQSLADGMNQSYGSELPEQSYRRSSEVPHHYSLQNPNSQKSFNISHRTTPSPMETTPYSNLPCYNKVIKKEPVCDPLVDPFQRANSVHSQSPGVNHSLQTSDLPFKANGALPSSGRSNAEGPCSMSLPNDKSGLEKRDYFGVHSNVPALKDKQWTPYGTDVPVGQRDSLDAQSPGKVWSSCKLSDSPAVLPSFASTQTKNWNGRQASLNQGLKEPMPFQEKLWNSVAASDRCSVTPSDRSSVTPCAELQDKNWASFPNPVGNSLKTESSQNHWDPYSLDDNMDDGQSKSVKEEEDEEEIWSDSEHNFLDKNIGGVAVAPGHGSILIECARRELHATTPLKKPNRCHPARISLVFYQHKNLNQPNHGLALWEAKMKLLAERARVKEEEAARLGIKQEVKSLGKKRKWGGAATTETPPVEKKDFIPTRQATTILTDSATTAFSYAYTKVTGPYSRFI</sequence>
<name>TET3A_XENLA</name>
<evidence type="ECO:0000250" key="1">
    <source>
        <dbReference type="UniProtKB" id="A0JP82"/>
    </source>
</evidence>
<evidence type="ECO:0000250" key="2">
    <source>
        <dbReference type="UniProtKB" id="Q6N021"/>
    </source>
</evidence>
<evidence type="ECO:0000255" key="3"/>
<evidence type="ECO:0000255" key="4">
    <source>
        <dbReference type="PROSITE-ProRule" id="PRU00509"/>
    </source>
</evidence>
<evidence type="ECO:0000256" key="5">
    <source>
        <dbReference type="SAM" id="MobiDB-lite"/>
    </source>
</evidence>
<evidence type="ECO:0000269" key="6">
    <source>
    </source>
</evidence>
<evidence type="ECO:0000305" key="7"/>
<evidence type="ECO:0000312" key="8">
    <source>
        <dbReference type="EMBL" id="ADU77105.1"/>
    </source>
</evidence>
<evidence type="ECO:0000312" key="9">
    <source>
        <dbReference type="EMBL" id="OCT86689.1"/>
    </source>
</evidence>
<evidence type="ECO:0000312" key="10">
    <source>
        <dbReference type="Proteomes" id="UP000186698"/>
    </source>
</evidence>
<evidence type="ECO:0000312" key="11">
    <source>
        <dbReference type="Xenbase" id="XB-GENE-17338508"/>
    </source>
</evidence>
<organism evidence="10">
    <name type="scientific">Xenopus laevis</name>
    <name type="common">African clawed frog</name>
    <dbReference type="NCBI Taxonomy" id="8355"/>
    <lineage>
        <taxon>Eukaryota</taxon>
        <taxon>Metazoa</taxon>
        <taxon>Chordata</taxon>
        <taxon>Craniata</taxon>
        <taxon>Vertebrata</taxon>
        <taxon>Euteleostomi</taxon>
        <taxon>Amphibia</taxon>
        <taxon>Batrachia</taxon>
        <taxon>Anura</taxon>
        <taxon>Pipoidea</taxon>
        <taxon>Pipidae</taxon>
        <taxon>Xenopodinae</taxon>
        <taxon>Xenopus</taxon>
        <taxon>Xenopus</taxon>
    </lineage>
</organism>
<protein>
    <recommendedName>
        <fullName>Methylcytosine dioxygenase tet3-A</fullName>
        <ecNumber evidence="6">1.14.11.80</ecNumber>
    </recommendedName>
</protein>
<reference evidence="8" key="1">
    <citation type="journal article" date="2012" name="Cell">
        <title>Tet3 CXXC domain and dioxygenase activity cooperatively regulate key genes for Xenopus eye and neural development.</title>
        <authorList>
            <person name="Xu Y."/>
            <person name="Xu C."/>
            <person name="Kato A."/>
            <person name="Tempel W."/>
            <person name="Abreu J.G."/>
            <person name="Bian C."/>
            <person name="Hu Y."/>
            <person name="Hu D."/>
            <person name="Zhao B."/>
            <person name="Cerovina T."/>
            <person name="Diao J."/>
            <person name="Wu F."/>
            <person name="He H.H."/>
            <person name="Cui Q."/>
            <person name="Clark E."/>
            <person name="Ma C."/>
            <person name="Barbara A."/>
            <person name="Veenstra G.J.C."/>
            <person name="Xu G."/>
            <person name="Kaiser U.B."/>
            <person name="Liu X.S."/>
            <person name="Sugrue S.P."/>
            <person name="He X."/>
            <person name="Min J."/>
            <person name="Kato Y."/>
            <person name="Shi Y.G."/>
        </authorList>
    </citation>
    <scope>NUCLEOTIDE SEQUENCE [MRNA]</scope>
    <scope>FUNCTION</scope>
    <scope>CATALYTIC ACTIVITY</scope>
    <scope>DEVELOPMENTAL STAGE</scope>
    <scope>TISSUE SPECIFICITY</scope>
    <scope>DISRUPTION PHENOTYPE</scope>
</reference>
<reference evidence="10" key="2">
    <citation type="journal article" date="2016" name="Nature">
        <title>Genome evolution in the allotetraploid frog Xenopus laevis.</title>
        <authorList>
            <person name="Session A.M."/>
            <person name="Uno Y."/>
            <person name="Kwon T."/>
            <person name="Chapman J.A."/>
            <person name="Toyoda A."/>
            <person name="Takahashi S."/>
            <person name="Fukui A."/>
            <person name="Hikosaka A."/>
            <person name="Suzuki A."/>
            <person name="Kondo M."/>
            <person name="van Heeringen S.J."/>
            <person name="Quigley I."/>
            <person name="Heinz S."/>
            <person name="Ogino H."/>
            <person name="Ochi H."/>
            <person name="Hellsten U."/>
            <person name="Lyons J.B."/>
            <person name="Simakov O."/>
            <person name="Putnam N."/>
            <person name="Stites J."/>
            <person name="Kuroki Y."/>
            <person name="Tanaka T."/>
            <person name="Michiue T."/>
            <person name="Watanabe M."/>
            <person name="Bogdanovic O."/>
            <person name="Lister R."/>
            <person name="Georgiou G."/>
            <person name="Paranjpe S.S."/>
            <person name="van Kruijsbergen I."/>
            <person name="Shu S."/>
            <person name="Carlson J."/>
            <person name="Kinoshita T."/>
            <person name="Ohta Y."/>
            <person name="Mawaribuchi S."/>
            <person name="Jenkins J."/>
            <person name="Grimwood J."/>
            <person name="Schmutz J."/>
            <person name="Mitros T."/>
            <person name="Mozaffari S.V."/>
            <person name="Suzuki Y."/>
            <person name="Haramoto Y."/>
            <person name="Yamamoto T.S."/>
            <person name="Takagi C."/>
            <person name="Heald R."/>
            <person name="Miller K."/>
            <person name="Haudenschild C."/>
            <person name="Kitzman J."/>
            <person name="Nakayama T."/>
            <person name="Izutsu Y."/>
            <person name="Robert J."/>
            <person name="Fortriede J."/>
            <person name="Burns K."/>
            <person name="Lotay V."/>
            <person name="Karimi K."/>
            <person name="Yasuoka Y."/>
            <person name="Dichmann D.S."/>
            <person name="Flajnik M.F."/>
            <person name="Houston D.W."/>
            <person name="Shendure J."/>
            <person name="DuPasquier L."/>
            <person name="Vize P.D."/>
            <person name="Zorn A.M."/>
            <person name="Ito M."/>
            <person name="Marcotte E.M."/>
            <person name="Wallingford J.B."/>
            <person name="Ito Y."/>
            <person name="Asashima M."/>
            <person name="Ueno N."/>
            <person name="Matsuda Y."/>
            <person name="Veenstra G.J."/>
            <person name="Fujiyama A."/>
            <person name="Harland R.M."/>
            <person name="Taira M."/>
            <person name="Rokhsar D.S."/>
        </authorList>
    </citation>
    <scope>NUCLEOTIDE SEQUENCE [LARGE SCALE GENOMIC DNA]</scope>
    <source>
        <strain evidence="10">J</strain>
    </source>
</reference>
<comment type="function">
    <text evidence="6">Dioxygenase that catalyzes the conversion of the modified genomic base 5-methylcytosine (5mC) into 5-hydroxymethylcytosine (5hmC) and plays a key role in epigenetic chromatin reprogramming during embryonic development. Conversion of 5mC into 5hmC probably constitutes the first step in cytosine demethylation. Selectively binds to the promoter region of target genes and contributes to regulate the expression of numerous developmental genes, including pax6, rax, sox9 and six3. May also contribute to the regulation of target genes in ways that do not require its enzyme activity.</text>
</comment>
<comment type="catalytic activity">
    <reaction evidence="6">
        <text>a 5-methyl-2'-deoxycytidine in DNA + 2-oxoglutarate + O2 = a 5-hydroxymethyl-2'-deoxycytidine in DNA + succinate + CO2</text>
        <dbReference type="Rhea" id="RHEA:52636"/>
        <dbReference type="Rhea" id="RHEA-COMP:11370"/>
        <dbReference type="Rhea" id="RHEA-COMP:13315"/>
        <dbReference type="ChEBI" id="CHEBI:15379"/>
        <dbReference type="ChEBI" id="CHEBI:16526"/>
        <dbReference type="ChEBI" id="CHEBI:16810"/>
        <dbReference type="ChEBI" id="CHEBI:30031"/>
        <dbReference type="ChEBI" id="CHEBI:85454"/>
        <dbReference type="ChEBI" id="CHEBI:136731"/>
        <dbReference type="EC" id="1.14.11.80"/>
    </reaction>
</comment>
<comment type="catalytic activity">
    <reaction evidence="2">
        <text>a 5-hydroxymethyl-2'-deoxycytidine in DNA + 2-oxoglutarate + O2 = a 5-formyl-2'-deoxycytidine in DNA + succinate + CO2 + H2O</text>
        <dbReference type="Rhea" id="RHEA:53828"/>
        <dbReference type="Rhea" id="RHEA-COMP:13315"/>
        <dbReference type="Rhea" id="RHEA-COMP:13656"/>
        <dbReference type="ChEBI" id="CHEBI:15377"/>
        <dbReference type="ChEBI" id="CHEBI:15379"/>
        <dbReference type="ChEBI" id="CHEBI:16526"/>
        <dbReference type="ChEBI" id="CHEBI:16810"/>
        <dbReference type="ChEBI" id="CHEBI:30031"/>
        <dbReference type="ChEBI" id="CHEBI:136731"/>
        <dbReference type="ChEBI" id="CHEBI:137731"/>
        <dbReference type="EC" id="1.14.11.80"/>
    </reaction>
</comment>
<comment type="catalytic activity">
    <reaction evidence="2">
        <text>a 5-formyl-2'-deoxycytidine in DNA + 2-oxoglutarate + O2 = a 5-carboxyl-2'-deoxycytidine in DNA + succinate + CO2 + H(+)</text>
        <dbReference type="Rhea" id="RHEA:53832"/>
        <dbReference type="Rhea" id="RHEA-COMP:13656"/>
        <dbReference type="Rhea" id="RHEA-COMP:13657"/>
        <dbReference type="ChEBI" id="CHEBI:15378"/>
        <dbReference type="ChEBI" id="CHEBI:15379"/>
        <dbReference type="ChEBI" id="CHEBI:16526"/>
        <dbReference type="ChEBI" id="CHEBI:16810"/>
        <dbReference type="ChEBI" id="CHEBI:30031"/>
        <dbReference type="ChEBI" id="CHEBI:137731"/>
        <dbReference type="ChEBI" id="CHEBI:137732"/>
        <dbReference type="EC" id="1.14.11.80"/>
    </reaction>
</comment>
<comment type="cofactor">
    <cofactor evidence="2">
        <name>Fe(2+)</name>
        <dbReference type="ChEBI" id="CHEBI:29033"/>
    </cofactor>
    <text evidence="2">Binds 1 Fe(2+) ion per subunit.</text>
</comment>
<comment type="cofactor">
    <cofactor evidence="2">
        <name>Zn(2+)</name>
        <dbReference type="ChEBI" id="CHEBI:29105"/>
    </cofactor>
    <text evidence="2">The zinc ions have a structural role.</text>
</comment>
<comment type="subcellular location">
    <subcellularLocation>
        <location evidence="1">Nucleus</location>
    </subcellularLocation>
    <subcellularLocation>
        <location evidence="1">Chromosome</location>
    </subcellularLocation>
    <text evidence="1">Detected on chromatin, where it binds to target gene promoters.</text>
</comment>
<comment type="tissue specificity">
    <text evidence="6">Detected in embryo (at protein level). Detected in embryonic head, in developing brain, neural tube and eye.</text>
</comment>
<comment type="developmental stage">
    <text evidence="6">Expression in oocytes is very low. Barely detectable from stage 2 (2-cell stage) to stage 9. Increases strongly from stage 9 to 17, and decreases again at stage 25.</text>
</comment>
<comment type="domain">
    <text evidence="1">Binds target DNA that contains at least one unmethylated cytosine via the CXXC-type zinc-finger domain.</text>
</comment>
<comment type="disruption phenotype">
    <text evidence="6">Morpholino knockdown of both tet3-a and tet3-b causes defects in embryonic development, including malformations of the eye (eyeless), small head, and missing pigmentation along the lateral body, leading to embryonic death between stages 35 and 40.</text>
</comment>
<comment type="similarity">
    <text evidence="7">Belongs to the TET family.</text>
</comment>
<feature type="chain" id="PRO_0000442315" description="Methylcytosine dioxygenase tet3-A">
    <location>
        <begin position="1"/>
        <end position="1925"/>
    </location>
</feature>
<feature type="zinc finger region" description="CXXC-type" evidence="4">
    <location>
        <begin position="62"/>
        <end position="103"/>
    </location>
</feature>
<feature type="region of interest" description="Disordered" evidence="5">
    <location>
        <begin position="457"/>
        <end position="476"/>
    </location>
</feature>
<feature type="region of interest" description="Disordered" evidence="5">
    <location>
        <begin position="630"/>
        <end position="685"/>
    </location>
</feature>
<feature type="region of interest" description="Disordered" evidence="5">
    <location>
        <begin position="774"/>
        <end position="812"/>
    </location>
</feature>
<feature type="region of interest" description="Disordered" evidence="5">
    <location>
        <begin position="833"/>
        <end position="892"/>
    </location>
</feature>
<feature type="region of interest" description="Disordered" evidence="5">
    <location>
        <begin position="1307"/>
        <end position="1364"/>
    </location>
</feature>
<feature type="region of interest" description="Disordered" evidence="5">
    <location>
        <begin position="1474"/>
        <end position="1513"/>
    </location>
</feature>
<feature type="region of interest" description="Disordered" evidence="5">
    <location>
        <begin position="1556"/>
        <end position="1600"/>
    </location>
</feature>
<feature type="region of interest" description="Disordered" evidence="5">
    <location>
        <begin position="1722"/>
        <end position="1769"/>
    </location>
</feature>
<feature type="coiled-coil region" evidence="3">
    <location>
        <begin position="1837"/>
        <end position="1870"/>
    </location>
</feature>
<feature type="compositionally biased region" description="Polar residues" evidence="5">
    <location>
        <begin position="465"/>
        <end position="476"/>
    </location>
</feature>
<feature type="compositionally biased region" description="Basic residues" evidence="5">
    <location>
        <begin position="665"/>
        <end position="677"/>
    </location>
</feature>
<feature type="compositionally biased region" description="Low complexity" evidence="5">
    <location>
        <begin position="777"/>
        <end position="797"/>
    </location>
</feature>
<feature type="compositionally biased region" description="Polar residues" evidence="5">
    <location>
        <begin position="841"/>
        <end position="856"/>
    </location>
</feature>
<feature type="compositionally biased region" description="Polar residues" evidence="5">
    <location>
        <begin position="883"/>
        <end position="892"/>
    </location>
</feature>
<feature type="compositionally biased region" description="Basic and acidic residues" evidence="5">
    <location>
        <begin position="1316"/>
        <end position="1347"/>
    </location>
</feature>
<feature type="compositionally biased region" description="Polar residues" evidence="5">
    <location>
        <begin position="1350"/>
        <end position="1363"/>
    </location>
</feature>
<feature type="compositionally biased region" description="Basic and acidic residues" evidence="5">
    <location>
        <begin position="1490"/>
        <end position="1499"/>
    </location>
</feature>
<feature type="compositionally biased region" description="Polar residues" evidence="5">
    <location>
        <begin position="1502"/>
        <end position="1513"/>
    </location>
</feature>
<feature type="compositionally biased region" description="Polar residues" evidence="5">
    <location>
        <begin position="1556"/>
        <end position="1572"/>
    </location>
</feature>
<feature type="compositionally biased region" description="Polar residues" evidence="5">
    <location>
        <begin position="1730"/>
        <end position="1742"/>
    </location>
</feature>
<feature type="binding site" evidence="4">
    <location>
        <position position="69"/>
    </location>
    <ligand>
        <name>Zn(2+)</name>
        <dbReference type="ChEBI" id="CHEBI:29105"/>
        <label>1</label>
    </ligand>
</feature>
<feature type="binding site" evidence="4">
    <location>
        <position position="72"/>
    </location>
    <ligand>
        <name>Zn(2+)</name>
        <dbReference type="ChEBI" id="CHEBI:29105"/>
        <label>1</label>
    </ligand>
</feature>
<feature type="binding site" evidence="4">
    <location>
        <position position="75"/>
    </location>
    <ligand>
        <name>Zn(2+)</name>
        <dbReference type="ChEBI" id="CHEBI:29105"/>
        <label>1</label>
    </ligand>
</feature>
<feature type="binding site" evidence="4">
    <location>
        <position position="81"/>
    </location>
    <ligand>
        <name>Zn(2+)</name>
        <dbReference type="ChEBI" id="CHEBI:29105"/>
        <label>2</label>
    </ligand>
</feature>
<feature type="binding site" evidence="4">
    <location>
        <position position="84"/>
    </location>
    <ligand>
        <name>Zn(2+)</name>
        <dbReference type="ChEBI" id="CHEBI:29105"/>
        <label>2</label>
    </ligand>
</feature>
<feature type="binding site" evidence="4">
    <location>
        <position position="87"/>
    </location>
    <ligand>
        <name>Zn(2+)</name>
        <dbReference type="ChEBI" id="CHEBI:29105"/>
        <label>2</label>
    </ligand>
</feature>
<feature type="binding site" evidence="4">
    <location>
        <position position="97"/>
    </location>
    <ligand>
        <name>Zn(2+)</name>
        <dbReference type="ChEBI" id="CHEBI:29105"/>
        <label>2</label>
    </ligand>
</feature>
<feature type="binding site" evidence="4">
    <location>
        <position position="102"/>
    </location>
    <ligand>
        <name>Zn(2+)</name>
        <dbReference type="ChEBI" id="CHEBI:29105"/>
        <label>1</label>
    </ligand>
</feature>
<feature type="binding site" evidence="2">
    <location>
        <position position="982"/>
    </location>
    <ligand>
        <name>Zn(2+)</name>
        <dbReference type="ChEBI" id="CHEBI:29105"/>
        <label>3</label>
    </ligand>
</feature>
<feature type="binding site" evidence="2">
    <location>
        <position position="984"/>
    </location>
    <ligand>
        <name>Zn(2+)</name>
        <dbReference type="ChEBI" id="CHEBI:29105"/>
        <label>3</label>
    </ligand>
</feature>
<feature type="binding site" evidence="2">
    <location>
        <position position="1042"/>
    </location>
    <ligand>
        <name>Zn(2+)</name>
        <dbReference type="ChEBI" id="CHEBI:29105"/>
        <label>4</label>
    </ligand>
</feature>
<feature type="binding site" evidence="2">
    <location>
        <position position="1068"/>
    </location>
    <ligand>
        <name>Zn(2+)</name>
        <dbReference type="ChEBI" id="CHEBI:29105"/>
        <label>1</label>
    </ligand>
</feature>
<feature type="binding site" evidence="2">
    <location>
        <position position="1070"/>
    </location>
    <ligand>
        <name>Zn(2+)</name>
        <dbReference type="ChEBI" id="CHEBI:29105"/>
        <label>3</label>
    </ligand>
</feature>
<feature type="binding site" evidence="2">
    <location>
        <position position="1110"/>
    </location>
    <ligand>
        <name>2-oxoglutarate</name>
        <dbReference type="ChEBI" id="CHEBI:16810"/>
    </ligand>
</feature>
<feature type="binding site" evidence="2">
    <location>
        <position position="1120"/>
    </location>
    <ligand>
        <name>Zn(2+)</name>
        <dbReference type="ChEBI" id="CHEBI:29105"/>
        <label>4</label>
    </ligand>
</feature>
<feature type="binding site" evidence="2">
    <location>
        <position position="1122"/>
    </location>
    <ligand>
        <name>Zn(2+)</name>
        <dbReference type="ChEBI" id="CHEBI:29105"/>
        <label>4</label>
    </ligand>
</feature>
<feature type="binding site" evidence="2">
    <location>
        <position position="1138"/>
    </location>
    <ligand>
        <name>Zn(2+)</name>
        <dbReference type="ChEBI" id="CHEBI:29105"/>
        <label>3</label>
    </ligand>
</feature>
<feature type="binding site" evidence="2">
    <location>
        <position position="1147"/>
    </location>
    <ligand>
        <name>Zn(2+)</name>
        <dbReference type="ChEBI" id="CHEBI:29105"/>
        <label>3</label>
    </ligand>
</feature>
<feature type="binding site" evidence="2">
    <location>
        <position position="1207"/>
    </location>
    <ligand>
        <name>Zn(2+)</name>
        <dbReference type="ChEBI" id="CHEBI:29105"/>
        <label>3</label>
    </ligand>
</feature>
<feature type="binding site" evidence="2">
    <location>
        <position position="1223"/>
    </location>
    <ligand>
        <name>2-oxoglutarate</name>
        <dbReference type="ChEBI" id="CHEBI:16810"/>
    </ligand>
</feature>
<feature type="binding site" evidence="2">
    <location>
        <position position="1229"/>
    </location>
    <ligand>
        <name>Zn(2+)</name>
        <dbReference type="ChEBI" id="CHEBI:29105"/>
        <label>2</label>
    </ligand>
</feature>
<feature type="binding site" evidence="2">
    <location>
        <position position="1231"/>
    </location>
    <ligand>
        <name>Fe cation</name>
        <dbReference type="ChEBI" id="CHEBI:24875"/>
        <note>catalytic</note>
    </ligand>
</feature>
<feature type="binding site" evidence="2">
    <location>
        <position position="1233"/>
    </location>
    <ligand>
        <name>Fe cation</name>
        <dbReference type="ChEBI" id="CHEBI:24875"/>
        <note>catalytic</note>
    </ligand>
</feature>
<feature type="binding site" evidence="2">
    <location>
        <position position="1265"/>
    </location>
    <ligand>
        <name>2-oxoglutarate</name>
        <dbReference type="ChEBI" id="CHEBI:16810"/>
    </ligand>
</feature>
<feature type="binding site" evidence="2">
    <location>
        <position position="1804"/>
    </location>
    <ligand>
        <name>Fe cation</name>
        <dbReference type="ChEBI" id="CHEBI:24875"/>
        <note>catalytic</note>
    </ligand>
</feature>
<feature type="binding site" evidence="2">
    <location>
        <begin position="1819"/>
        <end position="1821"/>
    </location>
    <ligand>
        <name>2-oxoglutarate</name>
        <dbReference type="ChEBI" id="CHEBI:16810"/>
    </ligand>
</feature>
<feature type="sequence conflict" description="In Ref. 1; ADU77105." evidence="7" ref="1">
    <location>
        <position position="1"/>
    </location>
</feature>
<feature type="sequence conflict" description="In Ref. 1; ADU77105." evidence="7" ref="1">
    <original>A</original>
    <variation>V</variation>
    <location>
        <position position="598"/>
    </location>
</feature>
<gene>
    <name evidence="11" type="primary">tet3-a</name>
    <name evidence="9" type="ORF">XELAEV_18020377mg</name>
</gene>